<proteinExistence type="inferred from homology"/>
<sequence length="411" mass="42984">MFHPRARTMLLLSLPALIIGVASSLVLIAAMKVASVFQQFLWQRLPTSIGIAYDSPFWIVGMLTLTGIVVGLIIRYSPGHAGPDPAIEPLISMPVSPSALPGLLLALIIGLAGGVSLGPEHPIMTINIALAAAFGSRLFPRITALDWTILASAGTIGALFGTPVAAALIFSQTLSGSNDIPMWDRLFAPLMAAAAGSLTTSLFFHPHFSLPIAHYTQMRLVDIASGAIVAAIAIAAGMVAVWCLPRLHELLHRLKNPVLILGIGGFILGILGVIGGPLTLFKGLDEMQQMAFSQTLGAGDYFTLAVVKLAALVIAAASGFRGGRIFPAVFIGAALGLMLHAHVEAVPAAITVSCAILGLVLVVTRDGWLSLFMAAVVVPDTNLLPLLCIVMLPAWLLLAGKPLLAANRHEP</sequence>
<evidence type="ECO:0000255" key="1"/>
<evidence type="ECO:0000305" key="2"/>
<name>YFEO_SALTY</name>
<organism>
    <name type="scientific">Salmonella typhimurium (strain LT2 / SGSC1412 / ATCC 700720)</name>
    <dbReference type="NCBI Taxonomy" id="99287"/>
    <lineage>
        <taxon>Bacteria</taxon>
        <taxon>Pseudomonadati</taxon>
        <taxon>Pseudomonadota</taxon>
        <taxon>Gammaproteobacteria</taxon>
        <taxon>Enterobacterales</taxon>
        <taxon>Enterobacteriaceae</taxon>
        <taxon>Salmonella</taxon>
    </lineage>
</organism>
<protein>
    <recommendedName>
        <fullName>Putative ion-transport protein YfeO</fullName>
    </recommendedName>
</protein>
<gene>
    <name type="primary">yfeO</name>
    <name type="ordered locus">STM2404</name>
</gene>
<reference key="1">
    <citation type="submission" date="2000-07" db="EMBL/GenBank/DDBJ databases">
        <title>Nucleotide sequence of the Salmonella typhimurium ipd gene encoding a putative indole-3-pyruvate decarboxylase.</title>
        <authorList>
            <person name="Norel F."/>
        </authorList>
    </citation>
    <scope>NUCLEOTIDE SEQUENCE [GENOMIC DNA]</scope>
    <source>
        <strain>C52</strain>
    </source>
</reference>
<reference key="2">
    <citation type="journal article" date="2001" name="Nature">
        <title>Complete genome sequence of Salmonella enterica serovar Typhimurium LT2.</title>
        <authorList>
            <person name="McClelland M."/>
            <person name="Sanderson K.E."/>
            <person name="Spieth J."/>
            <person name="Clifton S.W."/>
            <person name="Latreille P."/>
            <person name="Courtney L."/>
            <person name="Porwollik S."/>
            <person name="Ali J."/>
            <person name="Dante M."/>
            <person name="Du F."/>
            <person name="Hou S."/>
            <person name="Layman D."/>
            <person name="Leonard S."/>
            <person name="Nguyen C."/>
            <person name="Scott K."/>
            <person name="Holmes A."/>
            <person name="Grewal N."/>
            <person name="Mulvaney E."/>
            <person name="Ryan E."/>
            <person name="Sun H."/>
            <person name="Florea L."/>
            <person name="Miller W."/>
            <person name="Stoneking T."/>
            <person name="Nhan M."/>
            <person name="Waterston R."/>
            <person name="Wilson R.K."/>
        </authorList>
    </citation>
    <scope>NUCLEOTIDE SEQUENCE [LARGE SCALE GENOMIC DNA]</scope>
    <source>
        <strain>LT2 / SGSC1412 / ATCC 700720</strain>
    </source>
</reference>
<dbReference type="EMBL" id="AJ401270">
    <property type="protein sequence ID" value="CAC48240.1"/>
    <property type="molecule type" value="Genomic_DNA"/>
</dbReference>
<dbReference type="EMBL" id="AE006468">
    <property type="protein sequence ID" value="AAL21304.1"/>
    <property type="molecule type" value="Genomic_DNA"/>
</dbReference>
<dbReference type="RefSeq" id="NP_461345.1">
    <property type="nucleotide sequence ID" value="NC_003197.2"/>
</dbReference>
<dbReference type="RefSeq" id="WP_000468920.1">
    <property type="nucleotide sequence ID" value="NC_003197.2"/>
</dbReference>
<dbReference type="SMR" id="Q93IM6"/>
<dbReference type="STRING" id="99287.STM2404"/>
<dbReference type="PaxDb" id="99287-STM2404"/>
<dbReference type="GeneID" id="1253926"/>
<dbReference type="KEGG" id="stm:STM2404"/>
<dbReference type="PATRIC" id="fig|99287.12.peg.2546"/>
<dbReference type="HOGENOM" id="CLU_053130_0_0_6"/>
<dbReference type="OMA" id="WKVPGHA"/>
<dbReference type="PhylomeDB" id="Q93IM6"/>
<dbReference type="BioCyc" id="SENT99287:STM2404-MONOMER"/>
<dbReference type="Proteomes" id="UP000001014">
    <property type="component" value="Chromosome"/>
</dbReference>
<dbReference type="GO" id="GO:0005886">
    <property type="term" value="C:plasma membrane"/>
    <property type="evidence" value="ECO:0000318"/>
    <property type="project" value="GO_Central"/>
</dbReference>
<dbReference type="GO" id="GO:0015108">
    <property type="term" value="F:chloride transmembrane transporter activity"/>
    <property type="evidence" value="ECO:0007669"/>
    <property type="project" value="InterPro"/>
</dbReference>
<dbReference type="GO" id="GO:0005216">
    <property type="term" value="F:monoatomic ion channel activity"/>
    <property type="evidence" value="ECO:0007669"/>
    <property type="project" value="UniProtKB-UniRule"/>
</dbReference>
<dbReference type="CDD" id="cd00400">
    <property type="entry name" value="Voltage_gated_ClC"/>
    <property type="match status" value="1"/>
</dbReference>
<dbReference type="FunFam" id="1.10.3080.10:FF:000007">
    <property type="entry name" value="Putative ion-transport protein YfeO"/>
    <property type="match status" value="1"/>
</dbReference>
<dbReference type="Gene3D" id="1.10.3080.10">
    <property type="entry name" value="Clc chloride channel"/>
    <property type="match status" value="1"/>
</dbReference>
<dbReference type="HAMAP" id="MF_01115">
    <property type="entry name" value="CLC_YfeO"/>
    <property type="match status" value="1"/>
</dbReference>
<dbReference type="InterPro" id="IPR022969">
    <property type="entry name" value="Chloride_channel_YfeO"/>
</dbReference>
<dbReference type="InterPro" id="IPR014743">
    <property type="entry name" value="Cl-channel_core"/>
</dbReference>
<dbReference type="InterPro" id="IPR001807">
    <property type="entry name" value="ClC"/>
</dbReference>
<dbReference type="InterPro" id="IPR050368">
    <property type="entry name" value="ClC-type_chloride_channel"/>
</dbReference>
<dbReference type="NCBIfam" id="NF002971">
    <property type="entry name" value="PRK03655.1"/>
    <property type="match status" value="1"/>
</dbReference>
<dbReference type="PANTHER" id="PTHR43427">
    <property type="entry name" value="CHLORIDE CHANNEL PROTEIN CLC-E"/>
    <property type="match status" value="1"/>
</dbReference>
<dbReference type="PANTHER" id="PTHR43427:SF9">
    <property type="entry name" value="ION-TRANSPORT PROTEIN YFEO-RELATED"/>
    <property type="match status" value="1"/>
</dbReference>
<dbReference type="Pfam" id="PF00654">
    <property type="entry name" value="Voltage_CLC"/>
    <property type="match status" value="1"/>
</dbReference>
<dbReference type="PRINTS" id="PR00762">
    <property type="entry name" value="CLCHANNEL"/>
</dbReference>
<dbReference type="SUPFAM" id="SSF81340">
    <property type="entry name" value="Clc chloride channel"/>
    <property type="match status" value="1"/>
</dbReference>
<accession>Q93IM6</accession>
<keyword id="KW-1003">Cell membrane</keyword>
<keyword id="KW-0407">Ion channel</keyword>
<keyword id="KW-0406">Ion transport</keyword>
<keyword id="KW-0472">Membrane</keyword>
<keyword id="KW-1185">Reference proteome</keyword>
<keyword id="KW-0812">Transmembrane</keyword>
<keyword id="KW-1133">Transmembrane helix</keyword>
<keyword id="KW-0813">Transport</keyword>
<feature type="chain" id="PRO_0000094498" description="Putative ion-transport protein YfeO">
    <location>
        <begin position="1"/>
        <end position="411"/>
    </location>
</feature>
<feature type="transmembrane region" description="Helical" evidence="1">
    <location>
        <begin position="9"/>
        <end position="31"/>
    </location>
</feature>
<feature type="transmembrane region" description="Helical" evidence="1">
    <location>
        <begin position="57"/>
        <end position="74"/>
    </location>
</feature>
<feature type="transmembrane region" description="Helical" evidence="1">
    <location>
        <begin position="95"/>
        <end position="117"/>
    </location>
</feature>
<feature type="transmembrane region" description="Helical" evidence="1">
    <location>
        <begin position="148"/>
        <end position="170"/>
    </location>
</feature>
<feature type="transmembrane region" description="Helical" evidence="1">
    <location>
        <begin position="186"/>
        <end position="208"/>
    </location>
</feature>
<feature type="transmembrane region" description="Helical" evidence="1">
    <location>
        <begin position="223"/>
        <end position="245"/>
    </location>
</feature>
<feature type="transmembrane region" description="Helical" evidence="1">
    <location>
        <begin position="258"/>
        <end position="280"/>
    </location>
</feature>
<feature type="transmembrane region" description="Helical" evidence="1">
    <location>
        <begin position="295"/>
        <end position="317"/>
    </location>
</feature>
<feature type="transmembrane region" description="Helical" evidence="1">
    <location>
        <begin position="322"/>
        <end position="341"/>
    </location>
</feature>
<feature type="transmembrane region" description="Helical" evidence="1">
    <location>
        <begin position="345"/>
        <end position="363"/>
    </location>
</feature>
<feature type="transmembrane region" description="Helical" evidence="1">
    <location>
        <begin position="376"/>
        <end position="398"/>
    </location>
</feature>
<comment type="subcellular location">
    <subcellularLocation>
        <location evidence="2">Cell membrane</location>
        <topology evidence="2">Multi-pass membrane protein</topology>
    </subcellularLocation>
</comment>
<comment type="similarity">
    <text evidence="2">Belongs to the chloride channel (TC 2.A.49) family.</text>
</comment>